<proteinExistence type="evidence at transcript level"/>
<dbReference type="EC" id="3.4.19.12"/>
<dbReference type="EMBL" id="CR860279">
    <property type="protein sequence ID" value="CAH92421.1"/>
    <property type="molecule type" value="mRNA"/>
</dbReference>
<dbReference type="RefSeq" id="NP_001126428.1">
    <property type="nucleotide sequence ID" value="NM_001132956.1"/>
</dbReference>
<dbReference type="RefSeq" id="XP_054398921.1">
    <property type="nucleotide sequence ID" value="XM_054542946.2"/>
</dbReference>
<dbReference type="SMR" id="Q5R739"/>
<dbReference type="FunCoup" id="Q5R739">
    <property type="interactions" value="1412"/>
</dbReference>
<dbReference type="STRING" id="9601.ENSPPYP00000013191"/>
<dbReference type="MEROPS" id="C86.004"/>
<dbReference type="Ensembl" id="ENSPPYT00000013729.3">
    <property type="protein sequence ID" value="ENSPPYP00000013191.3"/>
    <property type="gene ID" value="ENSPPYG00000011826.3"/>
</dbReference>
<dbReference type="GeneID" id="100173411"/>
<dbReference type="KEGG" id="pon:100173411"/>
<dbReference type="CTD" id="9929"/>
<dbReference type="eggNOG" id="KOG2934">
    <property type="taxonomic scope" value="Eukaryota"/>
</dbReference>
<dbReference type="GeneTree" id="ENSGT00390000009228"/>
<dbReference type="HOGENOM" id="CLU_103892_0_0_1"/>
<dbReference type="InParanoid" id="Q5R739"/>
<dbReference type="OMA" id="PPHIYHE"/>
<dbReference type="OrthoDB" id="10520132at2759"/>
<dbReference type="Proteomes" id="UP000001595">
    <property type="component" value="Chromosome 22"/>
</dbReference>
<dbReference type="GO" id="GO:0005737">
    <property type="term" value="C:cytoplasm"/>
    <property type="evidence" value="ECO:0007669"/>
    <property type="project" value="UniProtKB-SubCell"/>
</dbReference>
<dbReference type="GO" id="GO:0005886">
    <property type="term" value="C:plasma membrane"/>
    <property type="evidence" value="ECO:0007669"/>
    <property type="project" value="UniProtKB-SubCell"/>
</dbReference>
<dbReference type="GO" id="GO:0004843">
    <property type="term" value="F:cysteine-type deubiquitinase activity"/>
    <property type="evidence" value="ECO:0007669"/>
    <property type="project" value="UniProtKB-EC"/>
</dbReference>
<dbReference type="GO" id="GO:0048870">
    <property type="term" value="P:cell motility"/>
    <property type="evidence" value="ECO:0007669"/>
    <property type="project" value="Ensembl"/>
</dbReference>
<dbReference type="GO" id="GO:0006897">
    <property type="term" value="P:endocytosis"/>
    <property type="evidence" value="ECO:0007669"/>
    <property type="project" value="Ensembl"/>
</dbReference>
<dbReference type="GO" id="GO:0044091">
    <property type="term" value="P:membrane biogenesis"/>
    <property type="evidence" value="ECO:0007669"/>
    <property type="project" value="Ensembl"/>
</dbReference>
<dbReference type="GO" id="GO:0061024">
    <property type="term" value="P:membrane organization"/>
    <property type="evidence" value="ECO:0007669"/>
    <property type="project" value="Ensembl"/>
</dbReference>
<dbReference type="GO" id="GO:0016579">
    <property type="term" value="P:protein deubiquitination"/>
    <property type="evidence" value="ECO:0007669"/>
    <property type="project" value="Ensembl"/>
</dbReference>
<dbReference type="GO" id="GO:0006508">
    <property type="term" value="P:proteolysis"/>
    <property type="evidence" value="ECO:0007669"/>
    <property type="project" value="UniProtKB-KW"/>
</dbReference>
<dbReference type="FunFam" id="3.90.70.40:FF:000002">
    <property type="entry name" value="josephin-1 isoform X2"/>
    <property type="match status" value="1"/>
</dbReference>
<dbReference type="Gene3D" id="3.90.70.40">
    <property type="match status" value="1"/>
</dbReference>
<dbReference type="InterPro" id="IPR040053">
    <property type="entry name" value="JOSD1/2"/>
</dbReference>
<dbReference type="InterPro" id="IPR006155">
    <property type="entry name" value="Josephin"/>
</dbReference>
<dbReference type="PANTHER" id="PTHR13291">
    <property type="entry name" value="JOSEPHIN 1, 2"/>
    <property type="match status" value="1"/>
</dbReference>
<dbReference type="PANTHER" id="PTHR13291:SF1">
    <property type="entry name" value="JOSEPHIN-1"/>
    <property type="match status" value="1"/>
</dbReference>
<dbReference type="Pfam" id="PF02099">
    <property type="entry name" value="Josephin"/>
    <property type="match status" value="1"/>
</dbReference>
<dbReference type="SMART" id="SM01246">
    <property type="entry name" value="Josephin"/>
    <property type="match status" value="1"/>
</dbReference>
<dbReference type="PROSITE" id="PS50957">
    <property type="entry name" value="JOSEPHIN"/>
    <property type="match status" value="1"/>
</dbReference>
<name>JOS1_PONAB</name>
<gene>
    <name type="primary">JOSD1</name>
</gene>
<accession>Q5R739</accession>
<organism>
    <name type="scientific">Pongo abelii</name>
    <name type="common">Sumatran orangutan</name>
    <name type="synonym">Pongo pygmaeus abelii</name>
    <dbReference type="NCBI Taxonomy" id="9601"/>
    <lineage>
        <taxon>Eukaryota</taxon>
        <taxon>Metazoa</taxon>
        <taxon>Chordata</taxon>
        <taxon>Craniata</taxon>
        <taxon>Vertebrata</taxon>
        <taxon>Euteleostomi</taxon>
        <taxon>Mammalia</taxon>
        <taxon>Eutheria</taxon>
        <taxon>Euarchontoglires</taxon>
        <taxon>Primates</taxon>
        <taxon>Haplorrhini</taxon>
        <taxon>Catarrhini</taxon>
        <taxon>Hominidae</taxon>
        <taxon>Pongo</taxon>
    </lineage>
</organism>
<protein>
    <recommendedName>
        <fullName>Josephin-1</fullName>
        <ecNumber>3.4.19.12</ecNumber>
    </recommendedName>
    <alternativeName>
        <fullName>Josephin domain-containing protein 1</fullName>
    </alternativeName>
</protein>
<sequence>MSCVPWKGDKAKSESLELPQAAPPQIYHEKQRRELCALHALNNVFQDSNAFTRDTLQEIFQRLSPNTMVTPHKKSMLGNGNYDVNVIMAALQTKGYEAVWWDKRRDVGVIALTNVMGFIMNLPSSLCWGPLKLPLKRQHWICVREVGGAYYNLDSKLKMPEWIGGESELRKFLKHHLRGKNCELLLVVPEEVEAHQSWRTDV</sequence>
<evidence type="ECO:0000250" key="1"/>
<evidence type="ECO:0000250" key="2">
    <source>
        <dbReference type="UniProtKB" id="Q15040"/>
    </source>
</evidence>
<evidence type="ECO:0000255" key="3">
    <source>
        <dbReference type="PROSITE-ProRule" id="PRU00331"/>
    </source>
</evidence>
<comment type="function">
    <text evidence="1">Deubiquitinates monoubiquitinated probes (in vitro). When ubiquitinated, cleaves 'Lys-63'-linked and 'Lys-48'-linked poly-ubiquitin chains (in vitro), hence may act as a deubiquitinating enzyme. May increase macropinocytosis and suppress clathrin- and caveolae-mediated endocytosis. May enhance membrane dynamics and cell motility independently of its catalytic activity (By similarity).</text>
</comment>
<comment type="catalytic activity">
    <reaction>
        <text>Thiol-dependent hydrolysis of ester, thioester, amide, peptide and isopeptide bonds formed by the C-terminal Gly of ubiquitin (a 76-residue protein attached to proteins as an intracellular targeting signal).</text>
        <dbReference type="EC" id="3.4.19.12"/>
    </reaction>
</comment>
<comment type="subunit">
    <text evidence="1">Interacts with beta-actin/ACTB.</text>
</comment>
<comment type="subcellular location">
    <subcellularLocation>
        <location evidence="1">Cell membrane</location>
    </subcellularLocation>
    <subcellularLocation>
        <location evidence="1">Cytoplasm</location>
    </subcellularLocation>
    <text evidence="1">Ubiquitination increases localization the plasma membrane. In the cytosol, the unubiquitinated form may be associated with the cytoskeleton via ACTB-binding.</text>
</comment>
<comment type="PTM">
    <text evidence="1">Monoubiquitinated. Ubiquitination activates deubiquitination activity in vitro.</text>
</comment>
<reference key="1">
    <citation type="submission" date="2004-11" db="EMBL/GenBank/DDBJ databases">
        <authorList>
            <consortium name="The German cDNA consortium"/>
        </authorList>
    </citation>
    <scope>NUCLEOTIDE SEQUENCE [LARGE SCALE MRNA]</scope>
    <source>
        <tissue>Brain cortex</tissue>
    </source>
</reference>
<feature type="chain" id="PRO_0000053841" description="Josephin-1">
    <location>
        <begin position="1"/>
        <end position="202"/>
    </location>
</feature>
<feature type="domain" description="Josephin" evidence="3">
    <location>
        <begin position="23"/>
        <end position="202"/>
    </location>
</feature>
<feature type="active site" description="Nucleophile" evidence="3">
    <location>
        <position position="36"/>
    </location>
</feature>
<feature type="active site" description="Proton acceptor" evidence="3">
    <location>
        <position position="139"/>
    </location>
</feature>
<feature type="modified residue" description="Phosphoserine" evidence="2">
    <location>
        <position position="15"/>
    </location>
</feature>
<keyword id="KW-1003">Cell membrane</keyword>
<keyword id="KW-0963">Cytoplasm</keyword>
<keyword id="KW-0378">Hydrolase</keyword>
<keyword id="KW-0472">Membrane</keyword>
<keyword id="KW-0597">Phosphoprotein</keyword>
<keyword id="KW-0645">Protease</keyword>
<keyword id="KW-1185">Reference proteome</keyword>
<keyword id="KW-0832">Ubl conjugation</keyword>
<keyword id="KW-0833">Ubl conjugation pathway</keyword>